<dbReference type="EC" id="2.4.2.7" evidence="1"/>
<dbReference type="EMBL" id="CP000776">
    <property type="protein sequence ID" value="ABS51718.1"/>
    <property type="molecule type" value="Genomic_DNA"/>
</dbReference>
<dbReference type="RefSeq" id="WP_012108899.1">
    <property type="nucleotide sequence ID" value="NC_009714.1"/>
</dbReference>
<dbReference type="SMR" id="A7I261"/>
<dbReference type="STRING" id="360107.CHAB381_1044"/>
<dbReference type="KEGG" id="cha:CHAB381_1044"/>
<dbReference type="eggNOG" id="COG0503">
    <property type="taxonomic scope" value="Bacteria"/>
</dbReference>
<dbReference type="HOGENOM" id="CLU_063339_3_0_7"/>
<dbReference type="OrthoDB" id="9803963at2"/>
<dbReference type="UniPathway" id="UPA00588">
    <property type="reaction ID" value="UER00646"/>
</dbReference>
<dbReference type="Proteomes" id="UP000002407">
    <property type="component" value="Chromosome"/>
</dbReference>
<dbReference type="GO" id="GO:0005737">
    <property type="term" value="C:cytoplasm"/>
    <property type="evidence" value="ECO:0007669"/>
    <property type="project" value="UniProtKB-SubCell"/>
</dbReference>
<dbReference type="GO" id="GO:0002055">
    <property type="term" value="F:adenine binding"/>
    <property type="evidence" value="ECO:0007669"/>
    <property type="project" value="TreeGrafter"/>
</dbReference>
<dbReference type="GO" id="GO:0003999">
    <property type="term" value="F:adenine phosphoribosyltransferase activity"/>
    <property type="evidence" value="ECO:0007669"/>
    <property type="project" value="UniProtKB-UniRule"/>
</dbReference>
<dbReference type="GO" id="GO:0016208">
    <property type="term" value="F:AMP binding"/>
    <property type="evidence" value="ECO:0007669"/>
    <property type="project" value="TreeGrafter"/>
</dbReference>
<dbReference type="GO" id="GO:0006168">
    <property type="term" value="P:adenine salvage"/>
    <property type="evidence" value="ECO:0007669"/>
    <property type="project" value="InterPro"/>
</dbReference>
<dbReference type="GO" id="GO:0044209">
    <property type="term" value="P:AMP salvage"/>
    <property type="evidence" value="ECO:0007669"/>
    <property type="project" value="UniProtKB-UniRule"/>
</dbReference>
<dbReference type="GO" id="GO:0006166">
    <property type="term" value="P:purine ribonucleoside salvage"/>
    <property type="evidence" value="ECO:0007669"/>
    <property type="project" value="UniProtKB-KW"/>
</dbReference>
<dbReference type="CDD" id="cd06223">
    <property type="entry name" value="PRTases_typeI"/>
    <property type="match status" value="1"/>
</dbReference>
<dbReference type="FunFam" id="3.40.50.2020:FF:000021">
    <property type="entry name" value="Adenine phosphoribosyltransferase"/>
    <property type="match status" value="1"/>
</dbReference>
<dbReference type="Gene3D" id="3.40.50.2020">
    <property type="match status" value="1"/>
</dbReference>
<dbReference type="HAMAP" id="MF_00004">
    <property type="entry name" value="Aden_phosphoribosyltr"/>
    <property type="match status" value="1"/>
</dbReference>
<dbReference type="InterPro" id="IPR005764">
    <property type="entry name" value="Ade_phspho_trans"/>
</dbReference>
<dbReference type="InterPro" id="IPR000836">
    <property type="entry name" value="PRibTrfase_dom"/>
</dbReference>
<dbReference type="InterPro" id="IPR029057">
    <property type="entry name" value="PRTase-like"/>
</dbReference>
<dbReference type="InterPro" id="IPR050054">
    <property type="entry name" value="UPRTase/APRTase"/>
</dbReference>
<dbReference type="NCBIfam" id="TIGR01090">
    <property type="entry name" value="apt"/>
    <property type="match status" value="1"/>
</dbReference>
<dbReference type="NCBIfam" id="NF002634">
    <property type="entry name" value="PRK02304.1-3"/>
    <property type="match status" value="1"/>
</dbReference>
<dbReference type="NCBIfam" id="NF002636">
    <property type="entry name" value="PRK02304.1-5"/>
    <property type="match status" value="1"/>
</dbReference>
<dbReference type="PANTHER" id="PTHR32315">
    <property type="entry name" value="ADENINE PHOSPHORIBOSYLTRANSFERASE"/>
    <property type="match status" value="1"/>
</dbReference>
<dbReference type="PANTHER" id="PTHR32315:SF3">
    <property type="entry name" value="ADENINE PHOSPHORIBOSYLTRANSFERASE"/>
    <property type="match status" value="1"/>
</dbReference>
<dbReference type="Pfam" id="PF00156">
    <property type="entry name" value="Pribosyltran"/>
    <property type="match status" value="1"/>
</dbReference>
<dbReference type="SUPFAM" id="SSF53271">
    <property type="entry name" value="PRTase-like"/>
    <property type="match status" value="1"/>
</dbReference>
<dbReference type="PROSITE" id="PS00103">
    <property type="entry name" value="PUR_PYR_PR_TRANSFER"/>
    <property type="match status" value="1"/>
</dbReference>
<organism>
    <name type="scientific">Campylobacter hominis (strain ATCC BAA-381 / DSM 21671 / CCUG 45161 / LMG 19568 / NCTC 13146 / CH001A)</name>
    <dbReference type="NCBI Taxonomy" id="360107"/>
    <lineage>
        <taxon>Bacteria</taxon>
        <taxon>Pseudomonadati</taxon>
        <taxon>Campylobacterota</taxon>
        <taxon>Epsilonproteobacteria</taxon>
        <taxon>Campylobacterales</taxon>
        <taxon>Campylobacteraceae</taxon>
        <taxon>Campylobacter</taxon>
    </lineage>
</organism>
<name>APT_CAMHC</name>
<evidence type="ECO:0000255" key="1">
    <source>
        <dbReference type="HAMAP-Rule" id="MF_00004"/>
    </source>
</evidence>
<comment type="function">
    <text evidence="1">Catalyzes a salvage reaction resulting in the formation of AMP, that is energically less costly than de novo synthesis.</text>
</comment>
<comment type="catalytic activity">
    <reaction evidence="1">
        <text>AMP + diphosphate = 5-phospho-alpha-D-ribose 1-diphosphate + adenine</text>
        <dbReference type="Rhea" id="RHEA:16609"/>
        <dbReference type="ChEBI" id="CHEBI:16708"/>
        <dbReference type="ChEBI" id="CHEBI:33019"/>
        <dbReference type="ChEBI" id="CHEBI:58017"/>
        <dbReference type="ChEBI" id="CHEBI:456215"/>
        <dbReference type="EC" id="2.4.2.7"/>
    </reaction>
</comment>
<comment type="pathway">
    <text evidence="1">Purine metabolism; AMP biosynthesis via salvage pathway; AMP from adenine: step 1/1.</text>
</comment>
<comment type="subunit">
    <text evidence="1">Homodimer.</text>
</comment>
<comment type="subcellular location">
    <subcellularLocation>
        <location evidence="1">Cytoplasm</location>
    </subcellularLocation>
</comment>
<comment type="similarity">
    <text evidence="1">Belongs to the purine/pyrimidine phosphoribosyltransferase family.</text>
</comment>
<gene>
    <name evidence="1" type="primary">apt</name>
    <name type="ordered locus">CHAB381_1044</name>
</gene>
<keyword id="KW-0963">Cytoplasm</keyword>
<keyword id="KW-0328">Glycosyltransferase</keyword>
<keyword id="KW-0660">Purine salvage</keyword>
<keyword id="KW-1185">Reference proteome</keyword>
<keyword id="KW-0808">Transferase</keyword>
<accession>A7I261</accession>
<sequence length="182" mass="20296">MENLTQKEKNYLLSTIRDVKDFPKPGIIFKDITTLLNNKDAFNFLMSHLAKVYKDKNIDFIAGIESRGFIFGAALAAKINIPFVPIRKPKKLPYITISQKYSLEYGFDEIEIHIDAFSGVKNAKVLLIDDLIATGGTAKAAVELINQTNAKCVEACFLINLKDFGGAEKVAEMTKIYSVLEV</sequence>
<reference key="1">
    <citation type="submission" date="2007-07" db="EMBL/GenBank/DDBJ databases">
        <title>Complete genome sequence of Campylobacter hominis ATCC BAA-381, a commensal isolated from the human gastrointestinal tract.</title>
        <authorList>
            <person name="Fouts D.E."/>
            <person name="Mongodin E.F."/>
            <person name="Puiu D."/>
            <person name="Sebastian Y."/>
            <person name="Miller W.G."/>
            <person name="Mandrell R.E."/>
            <person name="Nelson K.E."/>
        </authorList>
    </citation>
    <scope>NUCLEOTIDE SEQUENCE [LARGE SCALE GENOMIC DNA]</scope>
    <source>
        <strain>ATCC BAA-381 / DSM 21671 / CCUG 45161 / LMG 19568 / NCTC 13146 / CH001A</strain>
    </source>
</reference>
<feature type="chain" id="PRO_1000000269" description="Adenine phosphoribosyltransferase">
    <location>
        <begin position="1"/>
        <end position="182"/>
    </location>
</feature>
<proteinExistence type="inferred from homology"/>
<protein>
    <recommendedName>
        <fullName evidence="1">Adenine phosphoribosyltransferase</fullName>
        <shortName evidence="1">APRT</shortName>
        <ecNumber evidence="1">2.4.2.7</ecNumber>
    </recommendedName>
</protein>